<proteinExistence type="evidence at transcript level"/>
<reference key="1">
    <citation type="submission" date="2004-12" db="EMBL/GenBank/DDBJ databases">
        <title>Molecular cloning and characterization of the interleukin 6 (IL6) gene from Tibetan macaque (Macaca thibetana) and its expression in Escherichia coli.</title>
        <authorList>
            <person name="Wei K."/>
            <person name="Zou F.D."/>
            <person name="Xia S."/>
            <person name="Pan J."/>
            <person name="Yue B.S."/>
        </authorList>
    </citation>
    <scope>NUCLEOTIDE SEQUENCE [MRNA]</scope>
</reference>
<sequence length="212" mass="23626">MNSVSTSAFGPVAFSLGLLLVLPAAFPAPVLPGEDSKDVAAPHSQPLTSSERIDKHIRYILDGISALRKETCNRSNMCESSKEALAENNLNLPKMAEKDGCFQSGFNEDTCLVKIITGLLEFEVYLEYLQNRFESSEEQARAVQMSTKALIQFLQKKAKNLDAITTPEPTTNASLLTKLQAQNQWLQDMTTHLILRSFKEFLQSSLRALRQM</sequence>
<gene>
    <name type="primary">IL6</name>
</gene>
<evidence type="ECO:0000250" key="1"/>
<evidence type="ECO:0000250" key="2">
    <source>
        <dbReference type="UniProtKB" id="P05231"/>
    </source>
</evidence>
<evidence type="ECO:0000250" key="3">
    <source>
        <dbReference type="UniProtKB" id="P08505"/>
    </source>
</evidence>
<evidence type="ECO:0000255" key="4"/>
<evidence type="ECO:0000305" key="5"/>
<keyword id="KW-0011">Acute phase</keyword>
<keyword id="KW-0202">Cytokine</keyword>
<keyword id="KW-1015">Disulfide bond</keyword>
<keyword id="KW-0325">Glycoprotein</keyword>
<keyword id="KW-0339">Growth factor</keyword>
<keyword id="KW-0597">Phosphoprotein</keyword>
<keyword id="KW-0964">Secreted</keyword>
<keyword id="KW-0732">Signal</keyword>
<protein>
    <recommendedName>
        <fullName>Interleukin-6</fullName>
        <shortName>IL-6</shortName>
    </recommendedName>
</protein>
<feature type="signal peptide" evidence="4">
    <location>
        <begin position="1"/>
        <end position="27"/>
    </location>
</feature>
<feature type="chain" id="PRO_0000015586" description="Interleukin-6">
    <location>
        <begin position="28"/>
        <end position="212"/>
    </location>
</feature>
<feature type="modified residue" description="Phosphoserine" evidence="2">
    <location>
        <position position="81"/>
    </location>
</feature>
<feature type="glycosylation site" description="N-linked (GlcNAc...) asparagine" evidence="4">
    <location>
        <position position="73"/>
    </location>
</feature>
<feature type="glycosylation site" description="N-linked (GlcNAc...) asparagine" evidence="4">
    <location>
        <position position="172"/>
    </location>
</feature>
<feature type="disulfide bond" evidence="1">
    <location>
        <begin position="72"/>
        <end position="78"/>
    </location>
</feature>
<feature type="disulfide bond" evidence="1">
    <location>
        <begin position="101"/>
        <end position="111"/>
    </location>
</feature>
<name>IL6_MACTH</name>
<accession>Q5I6E3</accession>
<organism>
    <name type="scientific">Macaca thibetana</name>
    <name type="common">Pere David's macaque</name>
    <name type="synonym">Tibetan macaque</name>
    <dbReference type="NCBI Taxonomy" id="54602"/>
    <lineage>
        <taxon>Eukaryota</taxon>
        <taxon>Metazoa</taxon>
        <taxon>Chordata</taxon>
        <taxon>Craniata</taxon>
        <taxon>Vertebrata</taxon>
        <taxon>Euteleostomi</taxon>
        <taxon>Mammalia</taxon>
        <taxon>Eutheria</taxon>
        <taxon>Euarchontoglires</taxon>
        <taxon>Primates</taxon>
        <taxon>Haplorrhini</taxon>
        <taxon>Catarrhini</taxon>
        <taxon>Cercopithecidae</taxon>
        <taxon>Cercopithecinae</taxon>
        <taxon>Macaca</taxon>
    </lineage>
</organism>
<dbReference type="EMBL" id="AY849928">
    <property type="protein sequence ID" value="AAW33962.1"/>
    <property type="molecule type" value="mRNA"/>
</dbReference>
<dbReference type="SMR" id="Q5I6E3"/>
<dbReference type="GlyCosmos" id="Q5I6E3">
    <property type="glycosylation" value="2 sites, No reported glycans"/>
</dbReference>
<dbReference type="GO" id="GO:0005615">
    <property type="term" value="C:extracellular space"/>
    <property type="evidence" value="ECO:0007669"/>
    <property type="project" value="UniProtKB-KW"/>
</dbReference>
<dbReference type="GO" id="GO:0005896">
    <property type="term" value="C:interleukin-6 receptor complex"/>
    <property type="evidence" value="ECO:0007669"/>
    <property type="project" value="TreeGrafter"/>
</dbReference>
<dbReference type="GO" id="GO:0005125">
    <property type="term" value="F:cytokine activity"/>
    <property type="evidence" value="ECO:0007669"/>
    <property type="project" value="UniProtKB-KW"/>
</dbReference>
<dbReference type="GO" id="GO:0008083">
    <property type="term" value="F:growth factor activity"/>
    <property type="evidence" value="ECO:0007669"/>
    <property type="project" value="UniProtKB-KW"/>
</dbReference>
<dbReference type="GO" id="GO:0005138">
    <property type="term" value="F:interleukin-6 receptor binding"/>
    <property type="evidence" value="ECO:0007669"/>
    <property type="project" value="InterPro"/>
</dbReference>
<dbReference type="GO" id="GO:0006953">
    <property type="term" value="P:acute-phase response"/>
    <property type="evidence" value="ECO:0007669"/>
    <property type="project" value="UniProtKB-KW"/>
</dbReference>
<dbReference type="GO" id="GO:0042593">
    <property type="term" value="P:glucose homeostasis"/>
    <property type="evidence" value="ECO:0000250"/>
    <property type="project" value="UniProtKB"/>
</dbReference>
<dbReference type="GO" id="GO:0072574">
    <property type="term" value="P:hepatocyte proliferation"/>
    <property type="evidence" value="ECO:0000250"/>
    <property type="project" value="UniProtKB"/>
</dbReference>
<dbReference type="GO" id="GO:0070102">
    <property type="term" value="P:interleukin-6-mediated signaling pathway"/>
    <property type="evidence" value="ECO:0000250"/>
    <property type="project" value="UniProtKB"/>
</dbReference>
<dbReference type="GO" id="GO:0097421">
    <property type="term" value="P:liver regeneration"/>
    <property type="evidence" value="ECO:0000250"/>
    <property type="project" value="UniProtKB"/>
</dbReference>
<dbReference type="GO" id="GO:0051240">
    <property type="term" value="P:positive regulation of multicellular organismal process"/>
    <property type="evidence" value="ECO:0007669"/>
    <property type="project" value="UniProtKB-ARBA"/>
</dbReference>
<dbReference type="GO" id="GO:0046427">
    <property type="term" value="P:positive regulation of receptor signaling pathway via JAK-STAT"/>
    <property type="evidence" value="ECO:0007669"/>
    <property type="project" value="TreeGrafter"/>
</dbReference>
<dbReference type="GO" id="GO:1904894">
    <property type="term" value="P:positive regulation of receptor signaling pathway via STAT"/>
    <property type="evidence" value="ECO:0000250"/>
    <property type="project" value="UniProtKB"/>
</dbReference>
<dbReference type="GO" id="GO:0070092">
    <property type="term" value="P:regulation of glucagon secretion"/>
    <property type="evidence" value="ECO:0000250"/>
    <property type="project" value="UniProtKB"/>
</dbReference>
<dbReference type="GO" id="GO:0050796">
    <property type="term" value="P:regulation of insulin secretion"/>
    <property type="evidence" value="ECO:0000250"/>
    <property type="project" value="UniProtKB"/>
</dbReference>
<dbReference type="GO" id="GO:0014823">
    <property type="term" value="P:response to activity"/>
    <property type="evidence" value="ECO:0000250"/>
    <property type="project" value="UniProtKB"/>
</dbReference>
<dbReference type="GO" id="GO:0072540">
    <property type="term" value="P:T-helper 17 cell lineage commitment"/>
    <property type="evidence" value="ECO:0000250"/>
    <property type="project" value="UniProtKB"/>
</dbReference>
<dbReference type="GO" id="GO:0010573">
    <property type="term" value="P:vascular endothelial growth factor production"/>
    <property type="evidence" value="ECO:0000250"/>
    <property type="project" value="UniProtKB"/>
</dbReference>
<dbReference type="FunFam" id="1.20.1250.10:FF:000006">
    <property type="entry name" value="Interleukin-6"/>
    <property type="match status" value="1"/>
</dbReference>
<dbReference type="Gene3D" id="1.20.1250.10">
    <property type="match status" value="1"/>
</dbReference>
<dbReference type="InterPro" id="IPR009079">
    <property type="entry name" value="4_helix_cytokine-like_core"/>
</dbReference>
<dbReference type="InterPro" id="IPR003574">
    <property type="entry name" value="IL-6-like"/>
</dbReference>
<dbReference type="InterPro" id="IPR030474">
    <property type="entry name" value="IL-6/GCSF/MGF"/>
</dbReference>
<dbReference type="InterPro" id="IPR030473">
    <property type="entry name" value="IL6/GCSF/MGF_CS"/>
</dbReference>
<dbReference type="PANTHER" id="PTHR48494">
    <property type="entry name" value="INTERLEUKIN-6"/>
    <property type="match status" value="1"/>
</dbReference>
<dbReference type="PANTHER" id="PTHR48494:SF1">
    <property type="entry name" value="INTERLEUKIN-6"/>
    <property type="match status" value="1"/>
</dbReference>
<dbReference type="Pfam" id="PF00489">
    <property type="entry name" value="IL6"/>
    <property type="match status" value="1"/>
</dbReference>
<dbReference type="PIRSF" id="PIRSF001935">
    <property type="entry name" value="IL6_MGF_GCSF"/>
    <property type="match status" value="1"/>
</dbReference>
<dbReference type="PRINTS" id="PR00433">
    <property type="entry name" value="IL6GCSFMGF"/>
</dbReference>
<dbReference type="PRINTS" id="PR00434">
    <property type="entry name" value="INTERLEUKIN6"/>
</dbReference>
<dbReference type="SMART" id="SM00126">
    <property type="entry name" value="IL6"/>
    <property type="match status" value="1"/>
</dbReference>
<dbReference type="SUPFAM" id="SSF47266">
    <property type="entry name" value="4-helical cytokines"/>
    <property type="match status" value="1"/>
</dbReference>
<dbReference type="PROSITE" id="PS00254">
    <property type="entry name" value="INTERLEUKIN_6"/>
    <property type="match status" value="1"/>
</dbReference>
<comment type="function">
    <text evidence="2">Cytokine with a wide variety of biological functions in immunity, tissue regeneration, and metabolism. Binds to IL6R, then the complex associates to the signaling subunit IL6ST/gp130 to trigger the intracellular IL6-signaling pathway. The interaction with the membrane-bound IL6R and IL6ST stimulates 'classic signaling', whereas the binding of IL6 and soluble IL6R to IL6ST stimulates 'trans-signaling'. Alternatively, 'cluster signaling' occurs when membrane-bound IL6:IL6R complexes on transmitter cells activate IL6ST receptors on neighboring receiver cells.</text>
</comment>
<comment type="function">
    <text evidence="2 3">IL6 is a potent inducer of the acute phase response. Rapid production of IL6 contributes to host defense during infection and tissue injury, but excessive IL6 synthesis is involved in disease pathology. In the innate immune response, is synthesized by myeloid cells, such as macrophages and dendritic cells, upon recognition of pathogens through toll-like receptors (TLRs) at the site of infection or tissue injury (By similarity). In the adaptive immune response, is required for the differentiation of B cells into immunoglobulin-secreting cells. Plays a major role in the differentiation of CD4(+) T cell subsets. Essential factor for the development of T follicular helper (Tfh) cells that are required for the induction of germinal-center formation. Required to drive naive CD4(+) T cells to the Th17 lineage. Also required for proliferation of myeloma cells and the survival of plasmablast cells (By similarity).</text>
</comment>
<comment type="function">
    <text evidence="2 3">Acts as an essential factor in bone homeostasis and on vessels directly or indirectly by induction of VEGF, resulting in increased angiogenesis activity and vascular permeability. Induces, through 'trans-signaling' and synergistically with IL1B and TNF, the production of VEGF. Involved in metabolic controls, is discharged into the bloodstream after muscle contraction increasing lipolysis and improving insulin resistance (By similarity). 'Trans-signaling' in central nervous system also regulates energy and glucose homeostasis. Mediates, through GLP-1, crosstalk between insulin-sensitive tissues, intestinal L cells and pancreatic islets to adapt to changes in insulin demand (By similarity). Also acts as a myokine (By similarity). Plays a protective role during liver injury, being required for maintenance of tissue regeneration (By similarity). Also has a pivotal role in iron metabolism by regulating HAMP/hepcidin expression upon inflammation or bacterial infection (By similarity). Through activation of IL6ST-YAP-NOTCH pathway, induces inflammation-induced epithelial regeneration (By similarity).</text>
</comment>
<comment type="subunit">
    <text evidence="2">Component of a hexamer of two molecules each of IL6, IL6R and IL6ST; first binds to IL6R to associate with the signaling subunit IL6ST. Interacts with IL6R (via the N-terminal ectodomain); this interaction may be affected by IL6R-binding with SORL1, hence decreasing IL6 cis signaling. Interacts with SORL1 (via the N-terminal ectodomain); this interaction leads to IL6 internalization and lysosomal degradation. May form a trimeric complex with the soluble SORL1 ectodomain and soluble IL6R receptor; this interaction might stabilize circulating IL6, hence promoting IL6 trans signaling.</text>
</comment>
<comment type="subcellular location">
    <subcellularLocation>
        <location evidence="2">Secreted</location>
    </subcellularLocation>
</comment>
<comment type="similarity">
    <text evidence="5">Belongs to the IL-6 superfamily.</text>
</comment>